<gene>
    <name evidence="1" type="primary">fusA</name>
    <name type="ordered locus">Mjls_1014</name>
</gene>
<sequence>MAQKDVLTDLNKVRNIGIMAHIDAGKTTTTERILYYTGVNYKIGETHDGASTTDWMEQEQERGITITSAAVTCFWNDNQINIIDTPGHVDFTVEVERSLRVLDGAVAVFDGKEGVEPQSEQVWRQADKYDVPRICFVNKMDKLGADFYFTVRTIEERLGATPLVIQLPIGAENDFIGIIDLVEMKAKVWRGETALGEKYEVEDIPAELADKADEYRTKLLEAVAETDEALLEKYFGGEELTVEEIKGAIRKLTVNSELYPVLCGSAFKNKGVQPMLDAVVDYLPSPLDVESVQGHVPNKEDELITRKPSVDEPFSALAFKIAVHPFFGKLTYVRVYSGTVESGSQVINSTKGKKERLGKLFQMHANKENPVERASAGHIYAVIGLKDTTTGDTLSDANQQIVLESMTFPDPVIEVAIEPKTKSDQEKLGTAIQKLAEEDPTFKVHLDQETGQTVIGGMGELHLDILVDRMRREFKVEANVGKPQVAYRETIKRKVEKVEFTHKKQTGGSGQFAKVLIDLEPFSGEDGATYEFENKVTGGRIPREYIPSVDAGAQDAMQYGVLAGYPLVNVKVTLLDGAYHEVDSSEMAFKVAGSQVLKKAAQAAQPVILEPIMAVEVTTPEDYMGEVIGDLNSRRGQIQAMEERAGARVVKAQVPLSEMFGYVGDLRSKTQGRANYSMVFDSYAEVPANVSKEIIAKATGQ</sequence>
<organism>
    <name type="scientific">Mycobacterium sp. (strain JLS)</name>
    <dbReference type="NCBI Taxonomy" id="164757"/>
    <lineage>
        <taxon>Bacteria</taxon>
        <taxon>Bacillati</taxon>
        <taxon>Actinomycetota</taxon>
        <taxon>Actinomycetes</taxon>
        <taxon>Mycobacteriales</taxon>
        <taxon>Mycobacteriaceae</taxon>
        <taxon>Mycobacterium</taxon>
    </lineage>
</organism>
<dbReference type="EMBL" id="CP000580">
    <property type="protein sequence ID" value="ABN96822.1"/>
    <property type="molecule type" value="Genomic_DNA"/>
</dbReference>
<dbReference type="SMR" id="A3PV95"/>
<dbReference type="KEGG" id="mjl:Mjls_1014"/>
<dbReference type="HOGENOM" id="CLU_002794_4_1_11"/>
<dbReference type="BioCyc" id="MSP164757:G1G8C-1026-MONOMER"/>
<dbReference type="GO" id="GO:0005737">
    <property type="term" value="C:cytoplasm"/>
    <property type="evidence" value="ECO:0007669"/>
    <property type="project" value="UniProtKB-SubCell"/>
</dbReference>
<dbReference type="GO" id="GO:0005525">
    <property type="term" value="F:GTP binding"/>
    <property type="evidence" value="ECO:0007669"/>
    <property type="project" value="UniProtKB-UniRule"/>
</dbReference>
<dbReference type="GO" id="GO:0003924">
    <property type="term" value="F:GTPase activity"/>
    <property type="evidence" value="ECO:0007669"/>
    <property type="project" value="InterPro"/>
</dbReference>
<dbReference type="GO" id="GO:0003746">
    <property type="term" value="F:translation elongation factor activity"/>
    <property type="evidence" value="ECO:0007669"/>
    <property type="project" value="UniProtKB-UniRule"/>
</dbReference>
<dbReference type="GO" id="GO:0032790">
    <property type="term" value="P:ribosome disassembly"/>
    <property type="evidence" value="ECO:0007669"/>
    <property type="project" value="TreeGrafter"/>
</dbReference>
<dbReference type="CDD" id="cd01886">
    <property type="entry name" value="EF-G"/>
    <property type="match status" value="1"/>
</dbReference>
<dbReference type="CDD" id="cd16262">
    <property type="entry name" value="EFG_III"/>
    <property type="match status" value="1"/>
</dbReference>
<dbReference type="CDD" id="cd01434">
    <property type="entry name" value="EFG_mtEFG1_IV"/>
    <property type="match status" value="1"/>
</dbReference>
<dbReference type="CDD" id="cd03713">
    <property type="entry name" value="EFG_mtEFG_C"/>
    <property type="match status" value="1"/>
</dbReference>
<dbReference type="CDD" id="cd04088">
    <property type="entry name" value="EFG_mtEFG_II"/>
    <property type="match status" value="1"/>
</dbReference>
<dbReference type="FunFam" id="2.40.30.10:FF:000006">
    <property type="entry name" value="Elongation factor G"/>
    <property type="match status" value="1"/>
</dbReference>
<dbReference type="FunFam" id="3.30.230.10:FF:000003">
    <property type="entry name" value="Elongation factor G"/>
    <property type="match status" value="1"/>
</dbReference>
<dbReference type="FunFam" id="3.30.70.240:FF:000001">
    <property type="entry name" value="Elongation factor G"/>
    <property type="match status" value="1"/>
</dbReference>
<dbReference type="FunFam" id="3.30.70.870:FF:000001">
    <property type="entry name" value="Elongation factor G"/>
    <property type="match status" value="1"/>
</dbReference>
<dbReference type="FunFam" id="3.40.50.300:FF:000029">
    <property type="entry name" value="Elongation factor G"/>
    <property type="match status" value="1"/>
</dbReference>
<dbReference type="Gene3D" id="3.30.230.10">
    <property type="match status" value="1"/>
</dbReference>
<dbReference type="Gene3D" id="3.30.70.240">
    <property type="match status" value="1"/>
</dbReference>
<dbReference type="Gene3D" id="3.30.70.870">
    <property type="entry name" value="Elongation Factor G (Translational Gtpase), domain 3"/>
    <property type="match status" value="1"/>
</dbReference>
<dbReference type="Gene3D" id="3.40.50.300">
    <property type="entry name" value="P-loop containing nucleotide triphosphate hydrolases"/>
    <property type="match status" value="1"/>
</dbReference>
<dbReference type="Gene3D" id="2.40.30.10">
    <property type="entry name" value="Translation factors"/>
    <property type="match status" value="1"/>
</dbReference>
<dbReference type="HAMAP" id="MF_00054_B">
    <property type="entry name" value="EF_G_EF_2_B"/>
    <property type="match status" value="1"/>
</dbReference>
<dbReference type="InterPro" id="IPR041095">
    <property type="entry name" value="EFG_II"/>
</dbReference>
<dbReference type="InterPro" id="IPR009022">
    <property type="entry name" value="EFG_III"/>
</dbReference>
<dbReference type="InterPro" id="IPR035647">
    <property type="entry name" value="EFG_III/V"/>
</dbReference>
<dbReference type="InterPro" id="IPR047872">
    <property type="entry name" value="EFG_IV"/>
</dbReference>
<dbReference type="InterPro" id="IPR035649">
    <property type="entry name" value="EFG_V"/>
</dbReference>
<dbReference type="InterPro" id="IPR000640">
    <property type="entry name" value="EFG_V-like"/>
</dbReference>
<dbReference type="InterPro" id="IPR004161">
    <property type="entry name" value="EFTu-like_2"/>
</dbReference>
<dbReference type="InterPro" id="IPR031157">
    <property type="entry name" value="G_TR_CS"/>
</dbReference>
<dbReference type="InterPro" id="IPR027417">
    <property type="entry name" value="P-loop_NTPase"/>
</dbReference>
<dbReference type="InterPro" id="IPR020568">
    <property type="entry name" value="Ribosomal_Su5_D2-typ_SF"/>
</dbReference>
<dbReference type="InterPro" id="IPR014721">
    <property type="entry name" value="Ribsml_uS5_D2-typ_fold_subgr"/>
</dbReference>
<dbReference type="InterPro" id="IPR005225">
    <property type="entry name" value="Small_GTP-bd"/>
</dbReference>
<dbReference type="InterPro" id="IPR000795">
    <property type="entry name" value="T_Tr_GTP-bd_dom"/>
</dbReference>
<dbReference type="InterPro" id="IPR009000">
    <property type="entry name" value="Transl_B-barrel_sf"/>
</dbReference>
<dbReference type="InterPro" id="IPR004540">
    <property type="entry name" value="Transl_elong_EFG/EF2"/>
</dbReference>
<dbReference type="InterPro" id="IPR005517">
    <property type="entry name" value="Transl_elong_EFG/EF2_IV"/>
</dbReference>
<dbReference type="NCBIfam" id="TIGR00484">
    <property type="entry name" value="EF-G"/>
    <property type="match status" value="1"/>
</dbReference>
<dbReference type="NCBIfam" id="NF009381">
    <property type="entry name" value="PRK12740.1-5"/>
    <property type="match status" value="1"/>
</dbReference>
<dbReference type="NCBIfam" id="TIGR00231">
    <property type="entry name" value="small_GTP"/>
    <property type="match status" value="1"/>
</dbReference>
<dbReference type="PANTHER" id="PTHR43261:SF1">
    <property type="entry name" value="RIBOSOME-RELEASING FACTOR 2, MITOCHONDRIAL"/>
    <property type="match status" value="1"/>
</dbReference>
<dbReference type="PANTHER" id="PTHR43261">
    <property type="entry name" value="TRANSLATION ELONGATION FACTOR G-RELATED"/>
    <property type="match status" value="1"/>
</dbReference>
<dbReference type="Pfam" id="PF00679">
    <property type="entry name" value="EFG_C"/>
    <property type="match status" value="1"/>
</dbReference>
<dbReference type="Pfam" id="PF14492">
    <property type="entry name" value="EFG_III"/>
    <property type="match status" value="1"/>
</dbReference>
<dbReference type="Pfam" id="PF03764">
    <property type="entry name" value="EFG_IV"/>
    <property type="match status" value="1"/>
</dbReference>
<dbReference type="Pfam" id="PF00009">
    <property type="entry name" value="GTP_EFTU"/>
    <property type="match status" value="1"/>
</dbReference>
<dbReference type="Pfam" id="PF03144">
    <property type="entry name" value="GTP_EFTU_D2"/>
    <property type="match status" value="1"/>
</dbReference>
<dbReference type="PRINTS" id="PR00315">
    <property type="entry name" value="ELONGATNFCT"/>
</dbReference>
<dbReference type="SMART" id="SM00838">
    <property type="entry name" value="EFG_C"/>
    <property type="match status" value="1"/>
</dbReference>
<dbReference type="SMART" id="SM00889">
    <property type="entry name" value="EFG_IV"/>
    <property type="match status" value="1"/>
</dbReference>
<dbReference type="SUPFAM" id="SSF54980">
    <property type="entry name" value="EF-G C-terminal domain-like"/>
    <property type="match status" value="2"/>
</dbReference>
<dbReference type="SUPFAM" id="SSF52540">
    <property type="entry name" value="P-loop containing nucleoside triphosphate hydrolases"/>
    <property type="match status" value="1"/>
</dbReference>
<dbReference type="SUPFAM" id="SSF54211">
    <property type="entry name" value="Ribosomal protein S5 domain 2-like"/>
    <property type="match status" value="1"/>
</dbReference>
<dbReference type="SUPFAM" id="SSF50447">
    <property type="entry name" value="Translation proteins"/>
    <property type="match status" value="1"/>
</dbReference>
<dbReference type="PROSITE" id="PS00301">
    <property type="entry name" value="G_TR_1"/>
    <property type="match status" value="1"/>
</dbReference>
<dbReference type="PROSITE" id="PS51722">
    <property type="entry name" value="G_TR_2"/>
    <property type="match status" value="1"/>
</dbReference>
<evidence type="ECO:0000255" key="1">
    <source>
        <dbReference type="HAMAP-Rule" id="MF_00054"/>
    </source>
</evidence>
<reference key="1">
    <citation type="submission" date="2007-02" db="EMBL/GenBank/DDBJ databases">
        <title>Complete sequence of Mycobacterium sp. JLS.</title>
        <authorList>
            <consortium name="US DOE Joint Genome Institute"/>
            <person name="Copeland A."/>
            <person name="Lucas S."/>
            <person name="Lapidus A."/>
            <person name="Barry K."/>
            <person name="Detter J.C."/>
            <person name="Glavina del Rio T."/>
            <person name="Hammon N."/>
            <person name="Israni S."/>
            <person name="Dalin E."/>
            <person name="Tice H."/>
            <person name="Pitluck S."/>
            <person name="Chain P."/>
            <person name="Malfatti S."/>
            <person name="Shin M."/>
            <person name="Vergez L."/>
            <person name="Schmutz J."/>
            <person name="Larimer F."/>
            <person name="Land M."/>
            <person name="Hauser L."/>
            <person name="Kyrpides N."/>
            <person name="Mikhailova N."/>
            <person name="Miller C.D."/>
            <person name="Anderson A.J."/>
            <person name="Sims R.C."/>
            <person name="Richardson P."/>
        </authorList>
    </citation>
    <scope>NUCLEOTIDE SEQUENCE [LARGE SCALE GENOMIC DNA]</scope>
    <source>
        <strain>JLS</strain>
    </source>
</reference>
<feature type="chain" id="PRO_1000008854" description="Elongation factor G">
    <location>
        <begin position="1"/>
        <end position="701"/>
    </location>
</feature>
<feature type="domain" description="tr-type G">
    <location>
        <begin position="11"/>
        <end position="287"/>
    </location>
</feature>
<feature type="binding site" evidence="1">
    <location>
        <begin position="20"/>
        <end position="27"/>
    </location>
    <ligand>
        <name>GTP</name>
        <dbReference type="ChEBI" id="CHEBI:37565"/>
    </ligand>
</feature>
<feature type="binding site" evidence="1">
    <location>
        <begin position="84"/>
        <end position="88"/>
    </location>
    <ligand>
        <name>GTP</name>
        <dbReference type="ChEBI" id="CHEBI:37565"/>
    </ligand>
</feature>
<feature type="binding site" evidence="1">
    <location>
        <begin position="138"/>
        <end position="141"/>
    </location>
    <ligand>
        <name>GTP</name>
        <dbReference type="ChEBI" id="CHEBI:37565"/>
    </ligand>
</feature>
<keyword id="KW-0963">Cytoplasm</keyword>
<keyword id="KW-0251">Elongation factor</keyword>
<keyword id="KW-0342">GTP-binding</keyword>
<keyword id="KW-0547">Nucleotide-binding</keyword>
<keyword id="KW-0648">Protein biosynthesis</keyword>
<protein>
    <recommendedName>
        <fullName evidence="1">Elongation factor G</fullName>
        <shortName evidence="1">EF-G</shortName>
    </recommendedName>
</protein>
<proteinExistence type="inferred from homology"/>
<accession>A3PV95</accession>
<comment type="function">
    <text evidence="1">Catalyzes the GTP-dependent ribosomal translocation step during translation elongation. During this step, the ribosome changes from the pre-translocational (PRE) to the post-translocational (POST) state as the newly formed A-site-bound peptidyl-tRNA and P-site-bound deacylated tRNA move to the P and E sites, respectively. Catalyzes the coordinated movement of the two tRNA molecules, the mRNA and conformational changes in the ribosome.</text>
</comment>
<comment type="subcellular location">
    <subcellularLocation>
        <location evidence="1">Cytoplasm</location>
    </subcellularLocation>
</comment>
<comment type="similarity">
    <text evidence="1">Belongs to the TRAFAC class translation factor GTPase superfamily. Classic translation factor GTPase family. EF-G/EF-2 subfamily.</text>
</comment>
<name>EFG_MYCSJ</name>